<comment type="function">
    <text evidence="1">Translocates 4-amino-4-deoxy-L-arabinose-phosphoundecaprenol (alpha-L-Ara4N-phosphoundecaprenol) from the cytoplasmic to the periplasmic side of the inner membrane.</text>
</comment>
<comment type="pathway">
    <text evidence="1">Bacterial outer membrane biogenesis; lipopolysaccharide biosynthesis.</text>
</comment>
<comment type="subunit">
    <text evidence="1">Heterodimer of ArnE and ArnF.</text>
</comment>
<comment type="subcellular location">
    <subcellularLocation>
        <location evidence="1">Cell inner membrane</location>
        <topology evidence="1">Multi-pass membrane protein</topology>
    </subcellularLocation>
</comment>
<comment type="similarity">
    <text evidence="1">Belongs to the ArnE family.</text>
</comment>
<sequence length="114" mass="12799">MSLLLLLLACGLTCLGQVAQKFAVESWRGQPSSALQKLRSGWLWLALFSLGLGLLVWLLVLQRMEVGVAYPMLSLNFVFITLIAHFVFREHIDRRHWFGVALVIGGVLLLSRHA</sequence>
<accession>Q4KC79</accession>
<gene>
    <name evidence="1" type="primary">arnE</name>
    <name type="ordered locus">PFL_3048</name>
</gene>
<dbReference type="EMBL" id="CP000076">
    <property type="protein sequence ID" value="AAY92318.1"/>
    <property type="molecule type" value="Genomic_DNA"/>
</dbReference>
<dbReference type="RefSeq" id="WP_011061336.1">
    <property type="nucleotide sequence ID" value="NC_004129.6"/>
</dbReference>
<dbReference type="SMR" id="Q4KC79"/>
<dbReference type="STRING" id="220664.PFL_3048"/>
<dbReference type="KEGG" id="pfl:PFL_3048"/>
<dbReference type="PATRIC" id="fig|220664.5.peg.3108"/>
<dbReference type="eggNOG" id="COG2076">
    <property type="taxonomic scope" value="Bacteria"/>
</dbReference>
<dbReference type="HOGENOM" id="CLU_131462_5_1_6"/>
<dbReference type="UniPathway" id="UPA00030"/>
<dbReference type="Proteomes" id="UP000008540">
    <property type="component" value="Chromosome"/>
</dbReference>
<dbReference type="GO" id="GO:0005886">
    <property type="term" value="C:plasma membrane"/>
    <property type="evidence" value="ECO:0007669"/>
    <property type="project" value="UniProtKB-SubCell"/>
</dbReference>
<dbReference type="GO" id="GO:1901505">
    <property type="term" value="F:carbohydrate derivative transmembrane transporter activity"/>
    <property type="evidence" value="ECO:0007669"/>
    <property type="project" value="InterPro"/>
</dbReference>
<dbReference type="GO" id="GO:0009245">
    <property type="term" value="P:lipid A biosynthetic process"/>
    <property type="evidence" value="ECO:0007669"/>
    <property type="project" value="UniProtKB-UniRule"/>
</dbReference>
<dbReference type="GO" id="GO:0009103">
    <property type="term" value="P:lipopolysaccharide biosynthetic process"/>
    <property type="evidence" value="ECO:0007669"/>
    <property type="project" value="UniProtKB-UniRule"/>
</dbReference>
<dbReference type="FunFam" id="1.10.3730.20:FF:000002">
    <property type="entry name" value="Probable 4-amino-4-deoxy-L-arabinose-phosphoundecaprenol flippase subunit ArnE"/>
    <property type="match status" value="1"/>
</dbReference>
<dbReference type="Gene3D" id="1.10.3730.20">
    <property type="match status" value="1"/>
</dbReference>
<dbReference type="HAMAP" id="MF_01869">
    <property type="entry name" value="Flippase_ArnE"/>
    <property type="match status" value="1"/>
</dbReference>
<dbReference type="InterPro" id="IPR000620">
    <property type="entry name" value="EamA_dom"/>
</dbReference>
<dbReference type="InterPro" id="IPR022883">
    <property type="entry name" value="Flippase_ArnE"/>
</dbReference>
<dbReference type="InterPro" id="IPR000390">
    <property type="entry name" value="Small_drug/metabolite_transptr"/>
</dbReference>
<dbReference type="NCBIfam" id="NF011625">
    <property type="entry name" value="PRK15051.1"/>
    <property type="match status" value="1"/>
</dbReference>
<dbReference type="PANTHER" id="PTHR30561:SF23">
    <property type="entry name" value="4-AMINO-4-DEOXY-L-ARABINOSE-PHOSPHOUNDECAPRENOL FLIPPASE SUBUNIT ARNE-RELATED"/>
    <property type="match status" value="1"/>
</dbReference>
<dbReference type="PANTHER" id="PTHR30561">
    <property type="entry name" value="SMR FAMILY PROTON-DEPENDENT DRUG EFFLUX TRANSPORTER SUGE"/>
    <property type="match status" value="1"/>
</dbReference>
<dbReference type="Pfam" id="PF00892">
    <property type="entry name" value="EamA"/>
    <property type="match status" value="1"/>
</dbReference>
<dbReference type="SUPFAM" id="SSF103481">
    <property type="entry name" value="Multidrug resistance efflux transporter EmrE"/>
    <property type="match status" value="1"/>
</dbReference>
<keyword id="KW-0997">Cell inner membrane</keyword>
<keyword id="KW-1003">Cell membrane</keyword>
<keyword id="KW-0441">Lipid A biosynthesis</keyword>
<keyword id="KW-0444">Lipid biosynthesis</keyword>
<keyword id="KW-0443">Lipid metabolism</keyword>
<keyword id="KW-0448">Lipopolysaccharide biosynthesis</keyword>
<keyword id="KW-0472">Membrane</keyword>
<keyword id="KW-0812">Transmembrane</keyword>
<keyword id="KW-1133">Transmembrane helix</keyword>
<keyword id="KW-0813">Transport</keyword>
<reference key="1">
    <citation type="journal article" date="2005" name="Nat. Biotechnol.">
        <title>Complete genome sequence of the plant commensal Pseudomonas fluorescens Pf-5.</title>
        <authorList>
            <person name="Paulsen I.T."/>
            <person name="Press C.M."/>
            <person name="Ravel J."/>
            <person name="Kobayashi D.Y."/>
            <person name="Myers G.S.A."/>
            <person name="Mavrodi D.V."/>
            <person name="DeBoy R.T."/>
            <person name="Seshadri R."/>
            <person name="Ren Q."/>
            <person name="Madupu R."/>
            <person name="Dodson R.J."/>
            <person name="Durkin A.S."/>
            <person name="Brinkac L.M."/>
            <person name="Daugherty S.C."/>
            <person name="Sullivan S.A."/>
            <person name="Rosovitz M.J."/>
            <person name="Gwinn M.L."/>
            <person name="Zhou L."/>
            <person name="Schneider D.J."/>
            <person name="Cartinhour S.W."/>
            <person name="Nelson W.C."/>
            <person name="Weidman J."/>
            <person name="Watkins K."/>
            <person name="Tran K."/>
            <person name="Khouri H."/>
            <person name="Pierson E.A."/>
            <person name="Pierson L.S. III"/>
            <person name="Thomashow L.S."/>
            <person name="Loper J.E."/>
        </authorList>
    </citation>
    <scope>NUCLEOTIDE SEQUENCE [LARGE SCALE GENOMIC DNA]</scope>
    <source>
        <strain>ATCC BAA-477 / NRRL B-23932 / Pf-5</strain>
    </source>
</reference>
<proteinExistence type="inferred from homology"/>
<feature type="chain" id="PRO_0000382985" description="Probable 4-amino-4-deoxy-L-arabinose-phosphoundecaprenol flippase subunit ArnE">
    <location>
        <begin position="1"/>
        <end position="114"/>
    </location>
</feature>
<feature type="transmembrane region" description="Helical" evidence="1">
    <location>
        <begin position="41"/>
        <end position="61"/>
    </location>
</feature>
<feature type="transmembrane region" description="Helical" evidence="1">
    <location>
        <begin position="68"/>
        <end position="88"/>
    </location>
</feature>
<feature type="domain" description="EamA" evidence="1">
    <location>
        <begin position="43"/>
        <end position="112"/>
    </location>
</feature>
<evidence type="ECO:0000255" key="1">
    <source>
        <dbReference type="HAMAP-Rule" id="MF_01869"/>
    </source>
</evidence>
<organism>
    <name type="scientific">Pseudomonas fluorescens (strain ATCC BAA-477 / NRRL B-23932 / Pf-5)</name>
    <dbReference type="NCBI Taxonomy" id="220664"/>
    <lineage>
        <taxon>Bacteria</taxon>
        <taxon>Pseudomonadati</taxon>
        <taxon>Pseudomonadota</taxon>
        <taxon>Gammaproteobacteria</taxon>
        <taxon>Pseudomonadales</taxon>
        <taxon>Pseudomonadaceae</taxon>
        <taxon>Pseudomonas</taxon>
    </lineage>
</organism>
<name>ARNE_PSEF5</name>
<protein>
    <recommendedName>
        <fullName evidence="1">Probable 4-amino-4-deoxy-L-arabinose-phosphoundecaprenol flippase subunit ArnE</fullName>
        <shortName evidence="1">L-Ara4N-phosphoundecaprenol flippase subunit ArnE</shortName>
    </recommendedName>
    <alternativeName>
        <fullName evidence="1">Undecaprenyl phosphate-aminoarabinose flippase subunit ArnE</fullName>
    </alternativeName>
</protein>